<reference key="1">
    <citation type="journal article" date="2007" name="Proc. Natl. Acad. Sci. U.S.A.">
        <title>Genome and proteome of long-chain alkane degrading Geobacillus thermodenitrificans NG80-2 isolated from a deep-subsurface oil reservoir.</title>
        <authorList>
            <person name="Feng L."/>
            <person name="Wang W."/>
            <person name="Cheng J."/>
            <person name="Ren Y."/>
            <person name="Zhao G."/>
            <person name="Gao C."/>
            <person name="Tang Y."/>
            <person name="Liu X."/>
            <person name="Han W."/>
            <person name="Peng X."/>
            <person name="Liu R."/>
            <person name="Wang L."/>
        </authorList>
    </citation>
    <scope>NUCLEOTIDE SEQUENCE [LARGE SCALE GENOMIC DNA]</scope>
    <source>
        <strain>NG80-2</strain>
    </source>
</reference>
<dbReference type="EC" id="2.7.2.11" evidence="1"/>
<dbReference type="EMBL" id="CP000557">
    <property type="protein sequence ID" value="ABO67287.1"/>
    <property type="molecule type" value="Genomic_DNA"/>
</dbReference>
<dbReference type="RefSeq" id="WP_011887602.1">
    <property type="nucleotide sequence ID" value="NC_009328.1"/>
</dbReference>
<dbReference type="SMR" id="A4IPN3"/>
<dbReference type="KEGG" id="gtn:GTNG_1932"/>
<dbReference type="eggNOG" id="COG0263">
    <property type="taxonomic scope" value="Bacteria"/>
</dbReference>
<dbReference type="HOGENOM" id="CLU_025400_2_0_9"/>
<dbReference type="UniPathway" id="UPA00098">
    <property type="reaction ID" value="UER00359"/>
</dbReference>
<dbReference type="Proteomes" id="UP000001578">
    <property type="component" value="Chromosome"/>
</dbReference>
<dbReference type="GO" id="GO:0005829">
    <property type="term" value="C:cytosol"/>
    <property type="evidence" value="ECO:0007669"/>
    <property type="project" value="TreeGrafter"/>
</dbReference>
<dbReference type="GO" id="GO:0005524">
    <property type="term" value="F:ATP binding"/>
    <property type="evidence" value="ECO:0007669"/>
    <property type="project" value="UniProtKB-KW"/>
</dbReference>
<dbReference type="GO" id="GO:0004349">
    <property type="term" value="F:glutamate 5-kinase activity"/>
    <property type="evidence" value="ECO:0007669"/>
    <property type="project" value="UniProtKB-UniRule"/>
</dbReference>
<dbReference type="GO" id="GO:0003723">
    <property type="term" value="F:RNA binding"/>
    <property type="evidence" value="ECO:0007669"/>
    <property type="project" value="InterPro"/>
</dbReference>
<dbReference type="GO" id="GO:0055129">
    <property type="term" value="P:L-proline biosynthetic process"/>
    <property type="evidence" value="ECO:0007669"/>
    <property type="project" value="UniProtKB-UniRule"/>
</dbReference>
<dbReference type="CDD" id="cd04242">
    <property type="entry name" value="AAK_G5K_ProB"/>
    <property type="match status" value="1"/>
</dbReference>
<dbReference type="CDD" id="cd21157">
    <property type="entry name" value="PUA_G5K"/>
    <property type="match status" value="1"/>
</dbReference>
<dbReference type="FunFam" id="2.30.130.10:FF:000007">
    <property type="entry name" value="Glutamate 5-kinase"/>
    <property type="match status" value="1"/>
</dbReference>
<dbReference type="FunFam" id="3.40.1160.10:FF:000018">
    <property type="entry name" value="Glutamate 5-kinase"/>
    <property type="match status" value="1"/>
</dbReference>
<dbReference type="Gene3D" id="3.40.1160.10">
    <property type="entry name" value="Acetylglutamate kinase-like"/>
    <property type="match status" value="1"/>
</dbReference>
<dbReference type="Gene3D" id="2.30.130.10">
    <property type="entry name" value="PUA domain"/>
    <property type="match status" value="1"/>
</dbReference>
<dbReference type="HAMAP" id="MF_00456">
    <property type="entry name" value="ProB"/>
    <property type="match status" value="1"/>
</dbReference>
<dbReference type="InterPro" id="IPR036393">
    <property type="entry name" value="AceGlu_kinase-like_sf"/>
</dbReference>
<dbReference type="InterPro" id="IPR001048">
    <property type="entry name" value="Asp/Glu/Uridylate_kinase"/>
</dbReference>
<dbReference type="InterPro" id="IPR041739">
    <property type="entry name" value="G5K_ProB"/>
</dbReference>
<dbReference type="InterPro" id="IPR001057">
    <property type="entry name" value="Glu/AcGlu_kinase"/>
</dbReference>
<dbReference type="InterPro" id="IPR011529">
    <property type="entry name" value="Glu_5kinase"/>
</dbReference>
<dbReference type="InterPro" id="IPR005715">
    <property type="entry name" value="Glu_5kinase/COase_Synthase"/>
</dbReference>
<dbReference type="InterPro" id="IPR019797">
    <property type="entry name" value="Glutamate_5-kinase_CS"/>
</dbReference>
<dbReference type="InterPro" id="IPR002478">
    <property type="entry name" value="PUA"/>
</dbReference>
<dbReference type="InterPro" id="IPR015947">
    <property type="entry name" value="PUA-like_sf"/>
</dbReference>
<dbReference type="InterPro" id="IPR036974">
    <property type="entry name" value="PUA_sf"/>
</dbReference>
<dbReference type="NCBIfam" id="TIGR01027">
    <property type="entry name" value="proB"/>
    <property type="match status" value="1"/>
</dbReference>
<dbReference type="PANTHER" id="PTHR43654">
    <property type="entry name" value="GLUTAMATE 5-KINASE"/>
    <property type="match status" value="1"/>
</dbReference>
<dbReference type="PANTHER" id="PTHR43654:SF1">
    <property type="entry name" value="ISOPENTENYL PHOSPHATE KINASE"/>
    <property type="match status" value="1"/>
</dbReference>
<dbReference type="Pfam" id="PF00696">
    <property type="entry name" value="AA_kinase"/>
    <property type="match status" value="1"/>
</dbReference>
<dbReference type="Pfam" id="PF01472">
    <property type="entry name" value="PUA"/>
    <property type="match status" value="1"/>
</dbReference>
<dbReference type="PIRSF" id="PIRSF000729">
    <property type="entry name" value="GK"/>
    <property type="match status" value="1"/>
</dbReference>
<dbReference type="PRINTS" id="PR00474">
    <property type="entry name" value="GLU5KINASE"/>
</dbReference>
<dbReference type="SMART" id="SM00359">
    <property type="entry name" value="PUA"/>
    <property type="match status" value="1"/>
</dbReference>
<dbReference type="SUPFAM" id="SSF53633">
    <property type="entry name" value="Carbamate kinase-like"/>
    <property type="match status" value="1"/>
</dbReference>
<dbReference type="SUPFAM" id="SSF88697">
    <property type="entry name" value="PUA domain-like"/>
    <property type="match status" value="1"/>
</dbReference>
<dbReference type="PROSITE" id="PS00902">
    <property type="entry name" value="GLUTAMATE_5_KINASE"/>
    <property type="match status" value="1"/>
</dbReference>
<dbReference type="PROSITE" id="PS50890">
    <property type="entry name" value="PUA"/>
    <property type="match status" value="1"/>
</dbReference>
<gene>
    <name evidence="1" type="primary">proB</name>
    <name type="ordered locus">GTNG_1932</name>
</gene>
<evidence type="ECO:0000255" key="1">
    <source>
        <dbReference type="HAMAP-Rule" id="MF_00456"/>
    </source>
</evidence>
<keyword id="KW-0028">Amino-acid biosynthesis</keyword>
<keyword id="KW-0067">ATP-binding</keyword>
<keyword id="KW-0963">Cytoplasm</keyword>
<keyword id="KW-0418">Kinase</keyword>
<keyword id="KW-0547">Nucleotide-binding</keyword>
<keyword id="KW-0641">Proline biosynthesis</keyword>
<keyword id="KW-0808">Transferase</keyword>
<name>PROB_GEOTN</name>
<protein>
    <recommendedName>
        <fullName evidence="1">Glutamate 5-kinase</fullName>
        <ecNumber evidence="1">2.7.2.11</ecNumber>
    </recommendedName>
    <alternativeName>
        <fullName evidence="1">Gamma-glutamyl kinase</fullName>
        <shortName evidence="1">GK</shortName>
    </alternativeName>
</protein>
<feature type="chain" id="PRO_1000081062" description="Glutamate 5-kinase">
    <location>
        <begin position="1"/>
        <end position="374"/>
    </location>
</feature>
<feature type="domain" description="PUA" evidence="1">
    <location>
        <begin position="276"/>
        <end position="354"/>
    </location>
</feature>
<feature type="binding site" evidence="1">
    <location>
        <position position="9"/>
    </location>
    <ligand>
        <name>ATP</name>
        <dbReference type="ChEBI" id="CHEBI:30616"/>
    </ligand>
</feature>
<feature type="binding site" evidence="1">
    <location>
        <position position="49"/>
    </location>
    <ligand>
        <name>substrate</name>
    </ligand>
</feature>
<feature type="binding site" evidence="1">
    <location>
        <position position="136"/>
    </location>
    <ligand>
        <name>substrate</name>
    </ligand>
</feature>
<feature type="binding site" evidence="1">
    <location>
        <position position="148"/>
    </location>
    <ligand>
        <name>substrate</name>
    </ligand>
</feature>
<feature type="binding site" evidence="1">
    <location>
        <begin position="168"/>
        <end position="169"/>
    </location>
    <ligand>
        <name>ATP</name>
        <dbReference type="ChEBI" id="CHEBI:30616"/>
    </ligand>
</feature>
<feature type="binding site" evidence="1">
    <location>
        <begin position="210"/>
        <end position="216"/>
    </location>
    <ligand>
        <name>ATP</name>
        <dbReference type="ChEBI" id="CHEBI:30616"/>
    </ligand>
</feature>
<sequence>MKRQRVVVKIGSSSLTDPKGGLCHDKLLDHVQAIAYMKQLGHDIILITSGAVAAGFGPLGYPTRPTTIAGKQAAAAVGQSLLMQAYSAQFAQFGFTAAQLLLTRSDFYSRERFRNLFATITTLLEHGAVPIINENDSVSVEELTFGDNDMLSALVAGFLHADALVLLTDINGLYDANPKTNPQAKKYAFLPEITSEMLASAGGSGSTVGTGGMRSKLLAAQKALSFGVSVFIGTGSGKEKLADILAGKGDGTYIGVPFPKQMQMRKQWIAYHAPVSGTITVDSGAEEALLDRGKSLLPAGVTAVSGDFHAMDVVNVINEKGVTIGRGQVYYAAADLKKVKGRPSEEARQYSYLHRPEVIHRDNWVTLRKERVKR</sequence>
<organism>
    <name type="scientific">Geobacillus thermodenitrificans (strain NG80-2)</name>
    <dbReference type="NCBI Taxonomy" id="420246"/>
    <lineage>
        <taxon>Bacteria</taxon>
        <taxon>Bacillati</taxon>
        <taxon>Bacillota</taxon>
        <taxon>Bacilli</taxon>
        <taxon>Bacillales</taxon>
        <taxon>Anoxybacillaceae</taxon>
        <taxon>Geobacillus</taxon>
    </lineage>
</organism>
<proteinExistence type="inferred from homology"/>
<accession>A4IPN3</accession>
<comment type="function">
    <text evidence="1">Catalyzes the transfer of a phosphate group to glutamate to form L-glutamate 5-phosphate.</text>
</comment>
<comment type="catalytic activity">
    <reaction evidence="1">
        <text>L-glutamate + ATP = L-glutamyl 5-phosphate + ADP</text>
        <dbReference type="Rhea" id="RHEA:14877"/>
        <dbReference type="ChEBI" id="CHEBI:29985"/>
        <dbReference type="ChEBI" id="CHEBI:30616"/>
        <dbReference type="ChEBI" id="CHEBI:58274"/>
        <dbReference type="ChEBI" id="CHEBI:456216"/>
        <dbReference type="EC" id="2.7.2.11"/>
    </reaction>
</comment>
<comment type="pathway">
    <text evidence="1">Amino-acid biosynthesis; L-proline biosynthesis; L-glutamate 5-semialdehyde from L-glutamate: step 1/2.</text>
</comment>
<comment type="subcellular location">
    <subcellularLocation>
        <location evidence="1">Cytoplasm</location>
    </subcellularLocation>
</comment>
<comment type="similarity">
    <text evidence="1">Belongs to the glutamate 5-kinase family.</text>
</comment>